<dbReference type="EC" id="1.10.3.9" evidence="1"/>
<dbReference type="EMBL" id="AP006728">
    <property type="protein sequence ID" value="BAD26755.1"/>
    <property type="molecule type" value="Genomic_DNA"/>
</dbReference>
<dbReference type="RefSeq" id="YP_052726.1">
    <property type="nucleotide sequence ID" value="NC_005973.1"/>
</dbReference>
<dbReference type="SMR" id="Q6ENJ7"/>
<dbReference type="STRING" id="4536.Q6ENJ7"/>
<dbReference type="GeneID" id="2885939"/>
<dbReference type="eggNOG" id="ENOG502QR09">
    <property type="taxonomic scope" value="Eukaryota"/>
</dbReference>
<dbReference type="Proteomes" id="UP000006591">
    <property type="component" value="Chloroplast"/>
</dbReference>
<dbReference type="GO" id="GO:0009535">
    <property type="term" value="C:chloroplast thylakoid membrane"/>
    <property type="evidence" value="ECO:0007669"/>
    <property type="project" value="UniProtKB-SubCell"/>
</dbReference>
<dbReference type="GO" id="GO:0009523">
    <property type="term" value="C:photosystem II"/>
    <property type="evidence" value="ECO:0007669"/>
    <property type="project" value="UniProtKB-KW"/>
</dbReference>
<dbReference type="GO" id="GO:0009536">
    <property type="term" value="C:plastid"/>
    <property type="evidence" value="ECO:0000305"/>
    <property type="project" value="Gramene"/>
</dbReference>
<dbReference type="GO" id="GO:0016168">
    <property type="term" value="F:chlorophyll binding"/>
    <property type="evidence" value="ECO:0007669"/>
    <property type="project" value="UniProtKB-UniRule"/>
</dbReference>
<dbReference type="GO" id="GO:0045156">
    <property type="term" value="F:electron transporter, transferring electrons within the cyclic electron transport pathway of photosynthesis activity"/>
    <property type="evidence" value="ECO:0007669"/>
    <property type="project" value="InterPro"/>
</dbReference>
<dbReference type="GO" id="GO:0005506">
    <property type="term" value="F:iron ion binding"/>
    <property type="evidence" value="ECO:0007669"/>
    <property type="project" value="UniProtKB-UniRule"/>
</dbReference>
<dbReference type="GO" id="GO:0016682">
    <property type="term" value="F:oxidoreductase activity, acting on diphenols and related substances as donors, oxygen as acceptor"/>
    <property type="evidence" value="ECO:0007669"/>
    <property type="project" value="UniProtKB-UniRule"/>
</dbReference>
<dbReference type="GO" id="GO:0010242">
    <property type="term" value="F:oxygen evolving activity"/>
    <property type="evidence" value="ECO:0007669"/>
    <property type="project" value="UniProtKB-EC"/>
</dbReference>
<dbReference type="GO" id="GO:0009772">
    <property type="term" value="P:photosynthetic electron transport in photosystem II"/>
    <property type="evidence" value="ECO:0007669"/>
    <property type="project" value="InterPro"/>
</dbReference>
<dbReference type="GO" id="GO:0009635">
    <property type="term" value="P:response to herbicide"/>
    <property type="evidence" value="ECO:0007669"/>
    <property type="project" value="UniProtKB-KW"/>
</dbReference>
<dbReference type="CDD" id="cd09289">
    <property type="entry name" value="Photosystem-II_D1"/>
    <property type="match status" value="1"/>
</dbReference>
<dbReference type="FunFam" id="1.20.85.10:FF:000002">
    <property type="entry name" value="Photosystem II protein D1"/>
    <property type="match status" value="1"/>
</dbReference>
<dbReference type="Gene3D" id="1.20.85.10">
    <property type="entry name" value="Photosystem II protein D1-like"/>
    <property type="match status" value="1"/>
</dbReference>
<dbReference type="HAMAP" id="MF_01379">
    <property type="entry name" value="PSII_PsbA_D1"/>
    <property type="match status" value="1"/>
</dbReference>
<dbReference type="InterPro" id="IPR055266">
    <property type="entry name" value="D1/D2"/>
</dbReference>
<dbReference type="InterPro" id="IPR036854">
    <property type="entry name" value="Photo_II_D1/D2_sf"/>
</dbReference>
<dbReference type="InterPro" id="IPR000484">
    <property type="entry name" value="Photo_RC_L/M"/>
</dbReference>
<dbReference type="InterPro" id="IPR055265">
    <property type="entry name" value="Photo_RC_L/M_CS"/>
</dbReference>
<dbReference type="InterPro" id="IPR005867">
    <property type="entry name" value="PSII_D1"/>
</dbReference>
<dbReference type="NCBIfam" id="TIGR01151">
    <property type="entry name" value="psbA"/>
    <property type="match status" value="1"/>
</dbReference>
<dbReference type="PANTHER" id="PTHR33149:SF12">
    <property type="entry name" value="PHOTOSYSTEM II D2 PROTEIN"/>
    <property type="match status" value="1"/>
</dbReference>
<dbReference type="PANTHER" id="PTHR33149">
    <property type="entry name" value="PHOTOSYSTEM II PROTEIN D1"/>
    <property type="match status" value="1"/>
</dbReference>
<dbReference type="Pfam" id="PF00124">
    <property type="entry name" value="Photo_RC"/>
    <property type="match status" value="1"/>
</dbReference>
<dbReference type="PRINTS" id="PR00256">
    <property type="entry name" value="REACTNCENTRE"/>
</dbReference>
<dbReference type="SUPFAM" id="SSF81483">
    <property type="entry name" value="Bacterial photosystem II reaction centre, L and M subunits"/>
    <property type="match status" value="1"/>
</dbReference>
<dbReference type="PROSITE" id="PS00244">
    <property type="entry name" value="REACTION_CENTER"/>
    <property type="match status" value="1"/>
</dbReference>
<geneLocation type="chloroplast"/>
<gene>
    <name evidence="1" type="primary">psbA</name>
</gene>
<comment type="function">
    <text evidence="1">Photosystem II (PSII) is a light-driven water:plastoquinone oxidoreductase that uses light energy to abstract electrons from H(2)O, generating O(2) and a proton gradient subsequently used for ATP formation. It consists of a core antenna complex that captures photons, and an electron transfer chain that converts photonic excitation into a charge separation. The D1/D2 (PsbA/PsbD) reaction center heterodimer binds P680, the primary electron donor of PSII as well as several subsequent electron acceptors.</text>
</comment>
<comment type="catalytic activity">
    <reaction evidence="1">
        <text>2 a plastoquinone + 4 hnu + 2 H2O = 2 a plastoquinol + O2</text>
        <dbReference type="Rhea" id="RHEA:36359"/>
        <dbReference type="Rhea" id="RHEA-COMP:9561"/>
        <dbReference type="Rhea" id="RHEA-COMP:9562"/>
        <dbReference type="ChEBI" id="CHEBI:15377"/>
        <dbReference type="ChEBI" id="CHEBI:15379"/>
        <dbReference type="ChEBI" id="CHEBI:17757"/>
        <dbReference type="ChEBI" id="CHEBI:30212"/>
        <dbReference type="ChEBI" id="CHEBI:62192"/>
        <dbReference type="EC" id="1.10.3.9"/>
    </reaction>
</comment>
<comment type="cofactor">
    <text evidence="1">The D1/D2 heterodimer binds P680, chlorophylls that are the primary electron donor of PSII, and subsequent electron acceptors. It shares a non-heme iron and each subunit binds pheophytin, quinone, additional chlorophylls, carotenoids and lipids. D1 provides most of the ligands for the Mn4-Ca-O5 cluster of the oxygen-evolving complex (OEC). There is also a Cl(-1) ion associated with D1 and D2, which is required for oxygen evolution. The PSII complex binds additional chlorophylls, carotenoids and specific lipids.</text>
</comment>
<comment type="subunit">
    <text evidence="1">PSII is composed of 1 copy each of membrane proteins PsbA, PsbB, PsbC, PsbD, PsbE, PsbF, PsbH, PsbI, PsbJ, PsbK, PsbL, PsbM, PsbT, PsbX, PsbY, PsbZ, Psb30/Ycf12, at least 3 peripheral proteins of the oxygen-evolving complex and a large number of cofactors. It forms dimeric complexes.</text>
</comment>
<comment type="subcellular location">
    <subcellularLocation>
        <location evidence="1">Plastid</location>
        <location evidence="1">Chloroplast thylakoid membrane</location>
        <topology evidence="1">Multi-pass membrane protein</topology>
    </subcellularLocation>
</comment>
<comment type="PTM">
    <text evidence="1">Tyr-161 forms a radical intermediate that is referred to as redox-active TyrZ, YZ or Y-Z.</text>
</comment>
<comment type="PTM">
    <text evidence="1">C-terminally processed by CTPA; processing is essential to allow assembly of the oxygen-evolving complex and thus photosynthetic growth.</text>
</comment>
<comment type="miscellaneous">
    <text evidence="1">2 of the reaction center chlorophylls (ChlD1 and ChlD2) are entirely coordinated by water.</text>
</comment>
<comment type="miscellaneous">
    <text evidence="1">Herbicides such as atrazine, BNT, diuron or ioxynil bind in the Q(B) binding site and block subsequent electron transfer.</text>
</comment>
<comment type="similarity">
    <text evidence="1">Belongs to the reaction center PufL/M/PsbA/D family.</text>
</comment>
<feature type="initiator methionine" description="Removed" evidence="1">
    <location>
        <position position="1"/>
    </location>
</feature>
<feature type="chain" id="PRO_0000090458" description="Photosystem II protein D1" evidence="1">
    <location>
        <begin position="2"/>
        <end position="344"/>
    </location>
</feature>
<feature type="propeptide" id="PRO_0000316468" evidence="1">
    <location>
        <begin position="345"/>
        <end position="353"/>
    </location>
</feature>
<feature type="transmembrane region" description="Helical" evidence="1">
    <location>
        <begin position="29"/>
        <end position="46"/>
    </location>
</feature>
<feature type="transmembrane region" description="Helical" evidence="1">
    <location>
        <begin position="118"/>
        <end position="133"/>
    </location>
</feature>
<feature type="transmembrane region" description="Helical" evidence="1">
    <location>
        <begin position="142"/>
        <end position="156"/>
    </location>
</feature>
<feature type="transmembrane region" description="Helical" evidence="1">
    <location>
        <begin position="197"/>
        <end position="218"/>
    </location>
</feature>
<feature type="transmembrane region" description="Helical" evidence="1">
    <location>
        <begin position="274"/>
        <end position="288"/>
    </location>
</feature>
<feature type="binding site" description="axial binding residue" evidence="1">
    <location>
        <position position="118"/>
    </location>
    <ligand>
        <name>chlorophyll a</name>
        <dbReference type="ChEBI" id="CHEBI:58416"/>
        <label>ChlzD1</label>
    </ligand>
    <ligandPart>
        <name>Mg</name>
        <dbReference type="ChEBI" id="CHEBI:25107"/>
    </ligandPart>
</feature>
<feature type="binding site" evidence="1">
    <location>
        <position position="126"/>
    </location>
    <ligand>
        <name>pheophytin a</name>
        <dbReference type="ChEBI" id="CHEBI:136840"/>
        <label>D1</label>
    </ligand>
</feature>
<feature type="binding site" evidence="1">
    <location>
        <position position="170"/>
    </location>
    <ligand>
        <name>[CaMn4O5] cluster</name>
        <dbReference type="ChEBI" id="CHEBI:189552"/>
    </ligand>
</feature>
<feature type="binding site" evidence="1">
    <location>
        <position position="189"/>
    </location>
    <ligand>
        <name>[CaMn4O5] cluster</name>
        <dbReference type="ChEBI" id="CHEBI:189552"/>
    </ligand>
</feature>
<feature type="binding site" description="axial binding residue" evidence="1">
    <location>
        <position position="198"/>
    </location>
    <ligand>
        <name>chlorophyll a</name>
        <dbReference type="ChEBI" id="CHEBI:58416"/>
        <label>PD1</label>
    </ligand>
    <ligandPart>
        <name>Mg</name>
        <dbReference type="ChEBI" id="CHEBI:25107"/>
    </ligandPart>
</feature>
<feature type="binding site" evidence="1">
    <location>
        <position position="215"/>
    </location>
    <ligand>
        <name>a quinone</name>
        <dbReference type="ChEBI" id="CHEBI:132124"/>
        <label>B</label>
    </ligand>
</feature>
<feature type="binding site" evidence="1">
    <location>
        <position position="215"/>
    </location>
    <ligand>
        <name>Fe cation</name>
        <dbReference type="ChEBI" id="CHEBI:24875"/>
        <note>ligand shared with heterodimeric partner</note>
    </ligand>
</feature>
<feature type="binding site" evidence="1">
    <location>
        <begin position="264"/>
        <end position="265"/>
    </location>
    <ligand>
        <name>a quinone</name>
        <dbReference type="ChEBI" id="CHEBI:132124"/>
        <label>B</label>
    </ligand>
</feature>
<feature type="binding site" evidence="1">
    <location>
        <position position="272"/>
    </location>
    <ligand>
        <name>Fe cation</name>
        <dbReference type="ChEBI" id="CHEBI:24875"/>
        <note>ligand shared with heterodimeric partner</note>
    </ligand>
</feature>
<feature type="binding site" evidence="1">
    <location>
        <position position="332"/>
    </location>
    <ligand>
        <name>[CaMn4O5] cluster</name>
        <dbReference type="ChEBI" id="CHEBI:189552"/>
    </ligand>
</feature>
<feature type="binding site" evidence="1">
    <location>
        <position position="333"/>
    </location>
    <ligand>
        <name>[CaMn4O5] cluster</name>
        <dbReference type="ChEBI" id="CHEBI:189552"/>
    </ligand>
</feature>
<feature type="binding site" evidence="1">
    <location>
        <position position="342"/>
    </location>
    <ligand>
        <name>[CaMn4O5] cluster</name>
        <dbReference type="ChEBI" id="CHEBI:189552"/>
    </ligand>
</feature>
<feature type="binding site" evidence="1">
    <location>
        <position position="344"/>
    </location>
    <ligand>
        <name>[CaMn4O5] cluster</name>
        <dbReference type="ChEBI" id="CHEBI:189552"/>
    </ligand>
</feature>
<feature type="site" description="Tyrosine radical intermediate" evidence="1">
    <location>
        <position position="161"/>
    </location>
</feature>
<feature type="site" description="Stabilizes free radical intermediate" evidence="1">
    <location>
        <position position="190"/>
    </location>
</feature>
<feature type="site" description="Cleavage; by CTPA" evidence="1">
    <location>
        <begin position="344"/>
        <end position="345"/>
    </location>
</feature>
<feature type="modified residue" description="N-acetylthreonine" evidence="1">
    <location>
        <position position="2"/>
    </location>
</feature>
<feature type="modified residue" description="Phosphothreonine" evidence="1">
    <location>
        <position position="2"/>
    </location>
</feature>
<protein>
    <recommendedName>
        <fullName evidence="1">Photosystem II protein D1</fullName>
        <shortName evidence="1">PSII D1 protein</shortName>
        <ecNumber evidence="1">1.10.3.9</ecNumber>
    </recommendedName>
    <alternativeName>
        <fullName evidence="1">Photosystem II Q(B) protein</fullName>
    </alternativeName>
</protein>
<organism>
    <name type="scientific">Oryza nivara</name>
    <name type="common">Indian wild rice</name>
    <name type="synonym">Oryza sativa f. spontanea</name>
    <dbReference type="NCBI Taxonomy" id="4536"/>
    <lineage>
        <taxon>Eukaryota</taxon>
        <taxon>Viridiplantae</taxon>
        <taxon>Streptophyta</taxon>
        <taxon>Embryophyta</taxon>
        <taxon>Tracheophyta</taxon>
        <taxon>Spermatophyta</taxon>
        <taxon>Magnoliopsida</taxon>
        <taxon>Liliopsida</taxon>
        <taxon>Poales</taxon>
        <taxon>Poaceae</taxon>
        <taxon>BOP clade</taxon>
        <taxon>Oryzoideae</taxon>
        <taxon>Oryzeae</taxon>
        <taxon>Oryzinae</taxon>
        <taxon>Oryza</taxon>
    </lineage>
</organism>
<proteinExistence type="inferred from homology"/>
<name>PSBA_ORYNI</name>
<keyword id="KW-0007">Acetylation</keyword>
<keyword id="KW-0106">Calcium</keyword>
<keyword id="KW-0148">Chlorophyll</keyword>
<keyword id="KW-0150">Chloroplast</keyword>
<keyword id="KW-0157">Chromophore</keyword>
<keyword id="KW-0249">Electron transport</keyword>
<keyword id="KW-0359">Herbicide resistance</keyword>
<keyword id="KW-0408">Iron</keyword>
<keyword id="KW-0460">Magnesium</keyword>
<keyword id="KW-0464">Manganese</keyword>
<keyword id="KW-0472">Membrane</keyword>
<keyword id="KW-0479">Metal-binding</keyword>
<keyword id="KW-0560">Oxidoreductase</keyword>
<keyword id="KW-0597">Phosphoprotein</keyword>
<keyword id="KW-0602">Photosynthesis</keyword>
<keyword id="KW-0604">Photosystem II</keyword>
<keyword id="KW-0934">Plastid</keyword>
<keyword id="KW-1185">Reference proteome</keyword>
<keyword id="KW-0793">Thylakoid</keyword>
<keyword id="KW-0812">Transmembrane</keyword>
<keyword id="KW-1133">Transmembrane helix</keyword>
<keyword id="KW-0813">Transport</keyword>
<reference key="1">
    <citation type="journal article" date="2004" name="Gene">
        <title>The complete nucleotide sequence of wild rice (Oryza nivara) chloroplast genome: first genome wide comparative sequence analysis of wild and cultivated rice.</title>
        <authorList>
            <person name="Masood M.S."/>
            <person name="Nishikawa T."/>
            <person name="Fukuoka S."/>
            <person name="Njenga P.K."/>
            <person name="Tsudzuki T."/>
            <person name="Kadowaki K."/>
        </authorList>
    </citation>
    <scope>NUCLEOTIDE SEQUENCE [LARGE SCALE GENOMIC DNA]</scope>
    <source>
        <strain evidence="2">cv. SL10</strain>
    </source>
</reference>
<accession>Q6ENJ7</accession>
<sequence>MTAILERRESTSLWGRFCNWITSTENRLYIGWFGVLMIPTLLTATSVFIIAFIAAPPVDIDGIREPVSGSLLYGNNIISGAIIPTSAAIGLHFYPIWEAASVDEWLYNGGPYELIVLHFLLGVACYMGREWELSFRLGMRPWIAVAYSAPVAAATAVFLIYPIGQGSFSDGMPLGISGTFNFMIVFQAEHNILMHPFHMLGVAGVFGGSLFSAMHGSLVTSSLIRETTENESANEGYRFGQEEETYNIVAAHGYFGRLIFQYASFNNSRSLHFFLAAWPVVGIWFTALGISTMAFNLNGFNFNQSVVDSQGRVINTWADIINRANLGMEVMHERNAHNFPLDLAALEVPSLNG</sequence>
<evidence type="ECO:0000255" key="1">
    <source>
        <dbReference type="HAMAP-Rule" id="MF_01379"/>
    </source>
</evidence>
<evidence type="ECO:0000312" key="2">
    <source>
        <dbReference type="Proteomes" id="UP000006591"/>
    </source>
</evidence>